<protein>
    <recommendedName>
        <fullName evidence="1">Crossover junction endodeoxyribonuclease RuvC</fullName>
        <ecNumber evidence="1">3.1.21.10</ecNumber>
    </recommendedName>
    <alternativeName>
        <fullName evidence="1">Holliday junction nuclease RuvC</fullName>
    </alternativeName>
    <alternativeName>
        <fullName evidence="1">Holliday junction resolvase RuvC</fullName>
    </alternativeName>
</protein>
<feature type="chain" id="PRO_1000195258" description="Crossover junction endodeoxyribonuclease RuvC">
    <location>
        <begin position="1"/>
        <end position="173"/>
    </location>
</feature>
<feature type="active site" evidence="1">
    <location>
        <position position="8"/>
    </location>
</feature>
<feature type="active site" evidence="1">
    <location>
        <position position="67"/>
    </location>
</feature>
<feature type="active site" evidence="1">
    <location>
        <position position="139"/>
    </location>
</feature>
<feature type="binding site" evidence="1">
    <location>
        <position position="8"/>
    </location>
    <ligand>
        <name>Mg(2+)</name>
        <dbReference type="ChEBI" id="CHEBI:18420"/>
        <label>1</label>
    </ligand>
</feature>
<feature type="binding site" evidence="1">
    <location>
        <position position="67"/>
    </location>
    <ligand>
        <name>Mg(2+)</name>
        <dbReference type="ChEBI" id="CHEBI:18420"/>
        <label>2</label>
    </ligand>
</feature>
<feature type="binding site" evidence="1">
    <location>
        <position position="139"/>
    </location>
    <ligand>
        <name>Mg(2+)</name>
        <dbReference type="ChEBI" id="CHEBI:18420"/>
        <label>1</label>
    </ligand>
</feature>
<accession>B7LPI1</accession>
<dbReference type="EC" id="3.1.21.10" evidence="1"/>
<dbReference type="EMBL" id="CU928158">
    <property type="protein sequence ID" value="CAQ88734.1"/>
    <property type="molecule type" value="Genomic_DNA"/>
</dbReference>
<dbReference type="RefSeq" id="WP_001295503.1">
    <property type="nucleotide sequence ID" value="NC_011740.1"/>
</dbReference>
<dbReference type="SMR" id="B7LPI1"/>
<dbReference type="GeneID" id="89516631"/>
<dbReference type="KEGG" id="efe:EFER_1209"/>
<dbReference type="HOGENOM" id="CLU_091257_2_1_6"/>
<dbReference type="OrthoDB" id="9805499at2"/>
<dbReference type="Proteomes" id="UP000000745">
    <property type="component" value="Chromosome"/>
</dbReference>
<dbReference type="GO" id="GO:0005737">
    <property type="term" value="C:cytoplasm"/>
    <property type="evidence" value="ECO:0007669"/>
    <property type="project" value="UniProtKB-SubCell"/>
</dbReference>
<dbReference type="GO" id="GO:0048476">
    <property type="term" value="C:Holliday junction resolvase complex"/>
    <property type="evidence" value="ECO:0007669"/>
    <property type="project" value="UniProtKB-UniRule"/>
</dbReference>
<dbReference type="GO" id="GO:0008821">
    <property type="term" value="F:crossover junction DNA endonuclease activity"/>
    <property type="evidence" value="ECO:0007669"/>
    <property type="project" value="UniProtKB-UniRule"/>
</dbReference>
<dbReference type="GO" id="GO:0003677">
    <property type="term" value="F:DNA binding"/>
    <property type="evidence" value="ECO:0007669"/>
    <property type="project" value="UniProtKB-KW"/>
</dbReference>
<dbReference type="GO" id="GO:0000287">
    <property type="term" value="F:magnesium ion binding"/>
    <property type="evidence" value="ECO:0007669"/>
    <property type="project" value="UniProtKB-UniRule"/>
</dbReference>
<dbReference type="GO" id="GO:0006310">
    <property type="term" value="P:DNA recombination"/>
    <property type="evidence" value="ECO:0007669"/>
    <property type="project" value="UniProtKB-UniRule"/>
</dbReference>
<dbReference type="GO" id="GO:0006281">
    <property type="term" value="P:DNA repair"/>
    <property type="evidence" value="ECO:0007669"/>
    <property type="project" value="UniProtKB-UniRule"/>
</dbReference>
<dbReference type="CDD" id="cd16962">
    <property type="entry name" value="RuvC"/>
    <property type="match status" value="1"/>
</dbReference>
<dbReference type="FunFam" id="3.30.420.10:FF:000002">
    <property type="entry name" value="Crossover junction endodeoxyribonuclease RuvC"/>
    <property type="match status" value="1"/>
</dbReference>
<dbReference type="Gene3D" id="3.30.420.10">
    <property type="entry name" value="Ribonuclease H-like superfamily/Ribonuclease H"/>
    <property type="match status" value="1"/>
</dbReference>
<dbReference type="HAMAP" id="MF_00034">
    <property type="entry name" value="RuvC"/>
    <property type="match status" value="1"/>
</dbReference>
<dbReference type="InterPro" id="IPR012337">
    <property type="entry name" value="RNaseH-like_sf"/>
</dbReference>
<dbReference type="InterPro" id="IPR036397">
    <property type="entry name" value="RNaseH_sf"/>
</dbReference>
<dbReference type="InterPro" id="IPR020563">
    <property type="entry name" value="X-over_junc_endoDNase_Mg_BS"/>
</dbReference>
<dbReference type="InterPro" id="IPR002176">
    <property type="entry name" value="X-over_junc_endoDNase_RuvC"/>
</dbReference>
<dbReference type="NCBIfam" id="NF000711">
    <property type="entry name" value="PRK00039.2-1"/>
    <property type="match status" value="1"/>
</dbReference>
<dbReference type="NCBIfam" id="TIGR00228">
    <property type="entry name" value="ruvC"/>
    <property type="match status" value="1"/>
</dbReference>
<dbReference type="PANTHER" id="PTHR30194">
    <property type="entry name" value="CROSSOVER JUNCTION ENDODEOXYRIBONUCLEASE RUVC"/>
    <property type="match status" value="1"/>
</dbReference>
<dbReference type="PANTHER" id="PTHR30194:SF3">
    <property type="entry name" value="CROSSOVER JUNCTION ENDODEOXYRIBONUCLEASE RUVC"/>
    <property type="match status" value="1"/>
</dbReference>
<dbReference type="Pfam" id="PF02075">
    <property type="entry name" value="RuvC"/>
    <property type="match status" value="1"/>
</dbReference>
<dbReference type="PRINTS" id="PR00696">
    <property type="entry name" value="RSOLVASERUVC"/>
</dbReference>
<dbReference type="SUPFAM" id="SSF53098">
    <property type="entry name" value="Ribonuclease H-like"/>
    <property type="match status" value="1"/>
</dbReference>
<dbReference type="PROSITE" id="PS01321">
    <property type="entry name" value="RUVC"/>
    <property type="match status" value="1"/>
</dbReference>
<sequence length="173" mass="18747">MAIILGIDPGSRVTGYGVIRQVGRQLSYLGSGCIRTKVDDLPSRLKLIYAGVTEIITQFQPDYFAIEQVFMAKNADSALKLGQARGVAIVAAVNQELPVFEYAARQVKQTVVGIGSAEKSQVQHMVRTLLKLPANPQADAADALAIAITHCHVSQNAMQMSESRLNLARGRLR</sequence>
<proteinExistence type="inferred from homology"/>
<evidence type="ECO:0000255" key="1">
    <source>
        <dbReference type="HAMAP-Rule" id="MF_00034"/>
    </source>
</evidence>
<reference key="1">
    <citation type="journal article" date="2009" name="PLoS Genet.">
        <title>Organised genome dynamics in the Escherichia coli species results in highly diverse adaptive paths.</title>
        <authorList>
            <person name="Touchon M."/>
            <person name="Hoede C."/>
            <person name="Tenaillon O."/>
            <person name="Barbe V."/>
            <person name="Baeriswyl S."/>
            <person name="Bidet P."/>
            <person name="Bingen E."/>
            <person name="Bonacorsi S."/>
            <person name="Bouchier C."/>
            <person name="Bouvet O."/>
            <person name="Calteau A."/>
            <person name="Chiapello H."/>
            <person name="Clermont O."/>
            <person name="Cruveiller S."/>
            <person name="Danchin A."/>
            <person name="Diard M."/>
            <person name="Dossat C."/>
            <person name="Karoui M.E."/>
            <person name="Frapy E."/>
            <person name="Garry L."/>
            <person name="Ghigo J.M."/>
            <person name="Gilles A.M."/>
            <person name="Johnson J."/>
            <person name="Le Bouguenec C."/>
            <person name="Lescat M."/>
            <person name="Mangenot S."/>
            <person name="Martinez-Jehanne V."/>
            <person name="Matic I."/>
            <person name="Nassif X."/>
            <person name="Oztas S."/>
            <person name="Petit M.A."/>
            <person name="Pichon C."/>
            <person name="Rouy Z."/>
            <person name="Ruf C.S."/>
            <person name="Schneider D."/>
            <person name="Tourret J."/>
            <person name="Vacherie B."/>
            <person name="Vallenet D."/>
            <person name="Medigue C."/>
            <person name="Rocha E.P.C."/>
            <person name="Denamur E."/>
        </authorList>
    </citation>
    <scope>NUCLEOTIDE SEQUENCE [LARGE SCALE GENOMIC DNA]</scope>
    <source>
        <strain>ATCC 35469 / DSM 13698 / BCRC 15582 / CCUG 18766 / IAM 14443 / JCM 21226 / LMG 7866 / NBRC 102419 / NCTC 12128 / CDC 0568-73</strain>
    </source>
</reference>
<keyword id="KW-0963">Cytoplasm</keyword>
<keyword id="KW-0227">DNA damage</keyword>
<keyword id="KW-0233">DNA recombination</keyword>
<keyword id="KW-0234">DNA repair</keyword>
<keyword id="KW-0238">DNA-binding</keyword>
<keyword id="KW-0255">Endonuclease</keyword>
<keyword id="KW-0378">Hydrolase</keyword>
<keyword id="KW-0460">Magnesium</keyword>
<keyword id="KW-0479">Metal-binding</keyword>
<keyword id="KW-0540">Nuclease</keyword>
<comment type="function">
    <text evidence="1">The RuvA-RuvB-RuvC complex processes Holliday junction (HJ) DNA during genetic recombination and DNA repair. Endonuclease that resolves HJ intermediates. Cleaves cruciform DNA by making single-stranded nicks across the HJ at symmetrical positions within the homologous arms, yielding a 5'-phosphate and a 3'-hydroxyl group; requires a central core of homology in the junction. The consensus cleavage sequence is 5'-(A/T)TT(C/G)-3'. Cleavage occurs on the 3'-side of the TT dinucleotide at the point of strand exchange. HJ branch migration catalyzed by RuvA-RuvB allows RuvC to scan DNA until it finds its consensus sequence, where it cleaves and resolves the cruciform DNA.</text>
</comment>
<comment type="catalytic activity">
    <reaction evidence="1">
        <text>Endonucleolytic cleavage at a junction such as a reciprocal single-stranded crossover between two homologous DNA duplexes (Holliday junction).</text>
        <dbReference type="EC" id="3.1.21.10"/>
    </reaction>
</comment>
<comment type="cofactor">
    <cofactor evidence="1">
        <name>Mg(2+)</name>
        <dbReference type="ChEBI" id="CHEBI:18420"/>
    </cofactor>
    <text evidence="1">Binds 2 Mg(2+) ion per subunit.</text>
</comment>
<comment type="subunit">
    <text evidence="1">Homodimer which binds Holliday junction (HJ) DNA. The HJ becomes 2-fold symmetrical on binding to RuvC with unstacked arms; it has a different conformation from HJ DNA in complex with RuvA. In the full resolvosome a probable DNA-RuvA(4)-RuvB(12)-RuvC(2) complex forms which resolves the HJ.</text>
</comment>
<comment type="subcellular location">
    <subcellularLocation>
        <location evidence="1">Cytoplasm</location>
    </subcellularLocation>
</comment>
<comment type="similarity">
    <text evidence="1">Belongs to the RuvC family.</text>
</comment>
<organism>
    <name type="scientific">Escherichia fergusonii (strain ATCC 35469 / DSM 13698 / CCUG 18766 / IAM 14443 / JCM 21226 / LMG 7866 / NBRC 102419 / NCTC 12128 / CDC 0568-73)</name>
    <dbReference type="NCBI Taxonomy" id="585054"/>
    <lineage>
        <taxon>Bacteria</taxon>
        <taxon>Pseudomonadati</taxon>
        <taxon>Pseudomonadota</taxon>
        <taxon>Gammaproteobacteria</taxon>
        <taxon>Enterobacterales</taxon>
        <taxon>Enterobacteriaceae</taxon>
        <taxon>Escherichia</taxon>
    </lineage>
</organism>
<name>RUVC_ESCF3</name>
<gene>
    <name evidence="1" type="primary">ruvC</name>
    <name type="ordered locus">EFER_1209</name>
</gene>